<gene>
    <name evidence="1" type="primary">proA</name>
    <name type="ordered locus">Xfasm12_0321</name>
</gene>
<keyword id="KW-0028">Amino-acid biosynthesis</keyword>
<keyword id="KW-0963">Cytoplasm</keyword>
<keyword id="KW-0521">NADP</keyword>
<keyword id="KW-0560">Oxidoreductase</keyword>
<keyword id="KW-0641">Proline biosynthesis</keyword>
<proteinExistence type="inferred from homology"/>
<name>PROA_XYLFM</name>
<protein>
    <recommendedName>
        <fullName evidence="1">Gamma-glutamyl phosphate reductase</fullName>
        <shortName evidence="1">GPR</shortName>
        <ecNumber evidence="1">1.2.1.41</ecNumber>
    </recommendedName>
    <alternativeName>
        <fullName evidence="1">Glutamate-5-semialdehyde dehydrogenase</fullName>
    </alternativeName>
    <alternativeName>
        <fullName evidence="1">Glutamyl-gamma-semialdehyde dehydrogenase</fullName>
        <shortName evidence="1">GSA dehydrogenase</shortName>
    </alternativeName>
</protein>
<dbReference type="EC" id="1.2.1.41" evidence="1"/>
<dbReference type="EMBL" id="CP000941">
    <property type="protein sequence ID" value="ACA11342.1"/>
    <property type="molecule type" value="Genomic_DNA"/>
</dbReference>
<dbReference type="RefSeq" id="WP_012337615.1">
    <property type="nucleotide sequence ID" value="NC_010513.1"/>
</dbReference>
<dbReference type="SMR" id="B0U208"/>
<dbReference type="KEGG" id="xfm:Xfasm12_0321"/>
<dbReference type="HOGENOM" id="CLU_030231_0_0_6"/>
<dbReference type="UniPathway" id="UPA00098">
    <property type="reaction ID" value="UER00360"/>
</dbReference>
<dbReference type="GO" id="GO:0005737">
    <property type="term" value="C:cytoplasm"/>
    <property type="evidence" value="ECO:0007669"/>
    <property type="project" value="UniProtKB-SubCell"/>
</dbReference>
<dbReference type="GO" id="GO:0004350">
    <property type="term" value="F:glutamate-5-semialdehyde dehydrogenase activity"/>
    <property type="evidence" value="ECO:0007669"/>
    <property type="project" value="UniProtKB-UniRule"/>
</dbReference>
<dbReference type="GO" id="GO:0050661">
    <property type="term" value="F:NADP binding"/>
    <property type="evidence" value="ECO:0007669"/>
    <property type="project" value="InterPro"/>
</dbReference>
<dbReference type="GO" id="GO:0055129">
    <property type="term" value="P:L-proline biosynthetic process"/>
    <property type="evidence" value="ECO:0007669"/>
    <property type="project" value="UniProtKB-UniRule"/>
</dbReference>
<dbReference type="CDD" id="cd07079">
    <property type="entry name" value="ALDH_F18-19_ProA-GPR"/>
    <property type="match status" value="1"/>
</dbReference>
<dbReference type="FunFam" id="3.40.309.10:FF:000006">
    <property type="entry name" value="Gamma-glutamyl phosphate reductase"/>
    <property type="match status" value="1"/>
</dbReference>
<dbReference type="Gene3D" id="3.40.605.10">
    <property type="entry name" value="Aldehyde Dehydrogenase, Chain A, domain 1"/>
    <property type="match status" value="1"/>
</dbReference>
<dbReference type="Gene3D" id="3.40.309.10">
    <property type="entry name" value="Aldehyde Dehydrogenase, Chain A, domain 2"/>
    <property type="match status" value="1"/>
</dbReference>
<dbReference type="HAMAP" id="MF_00412">
    <property type="entry name" value="ProA"/>
    <property type="match status" value="1"/>
</dbReference>
<dbReference type="InterPro" id="IPR016161">
    <property type="entry name" value="Ald_DH/histidinol_DH"/>
</dbReference>
<dbReference type="InterPro" id="IPR016163">
    <property type="entry name" value="Ald_DH_C"/>
</dbReference>
<dbReference type="InterPro" id="IPR016162">
    <property type="entry name" value="Ald_DH_N"/>
</dbReference>
<dbReference type="InterPro" id="IPR015590">
    <property type="entry name" value="Aldehyde_DH_dom"/>
</dbReference>
<dbReference type="InterPro" id="IPR020593">
    <property type="entry name" value="G-glutamylP_reductase_CS"/>
</dbReference>
<dbReference type="InterPro" id="IPR012134">
    <property type="entry name" value="Glu-5-SA_DH"/>
</dbReference>
<dbReference type="InterPro" id="IPR000965">
    <property type="entry name" value="GPR_dom"/>
</dbReference>
<dbReference type="NCBIfam" id="NF001221">
    <property type="entry name" value="PRK00197.1"/>
    <property type="match status" value="1"/>
</dbReference>
<dbReference type="NCBIfam" id="TIGR00407">
    <property type="entry name" value="proA"/>
    <property type="match status" value="1"/>
</dbReference>
<dbReference type="PANTHER" id="PTHR11063:SF8">
    <property type="entry name" value="DELTA-1-PYRROLINE-5-CARBOXYLATE SYNTHASE"/>
    <property type="match status" value="1"/>
</dbReference>
<dbReference type="PANTHER" id="PTHR11063">
    <property type="entry name" value="GLUTAMATE SEMIALDEHYDE DEHYDROGENASE"/>
    <property type="match status" value="1"/>
</dbReference>
<dbReference type="Pfam" id="PF00171">
    <property type="entry name" value="Aldedh"/>
    <property type="match status" value="1"/>
</dbReference>
<dbReference type="PIRSF" id="PIRSF000151">
    <property type="entry name" value="GPR"/>
    <property type="match status" value="1"/>
</dbReference>
<dbReference type="SUPFAM" id="SSF53720">
    <property type="entry name" value="ALDH-like"/>
    <property type="match status" value="1"/>
</dbReference>
<dbReference type="PROSITE" id="PS01223">
    <property type="entry name" value="PROA"/>
    <property type="match status" value="1"/>
</dbReference>
<sequence length="435" mass="46777">MPHIRHLAQQCRDAARILATLSTDAKRRLLETMATALNTDAATILAANAADLDTARTQQVGTAMLDRLALDPQRLAAMADALRDIAALPDPVGQVTRDDRRPNGIHIQKIRVPLGVIAMIYEARPNVTADAAALCIKAGNGIILRGGSEAIRSNIAIATALQRALRLASLPETALILVQDMARHTMLELLQLSDLIDLVIPRGGEGLIRFVAEHARIPVIKHYKGVCHQFVDASADIEMAIRLLIDGKTTRPAACNALETLLVHTDIAPRFLPAAAAALRPYGVQLRGDHATCTLLPDVLLATDADYAAEYLDLILAIRIVPNLDAALEHIRRYGSDHTEVIVTADPAHADTFVQQLHSAVVMVNASSRFSDGGALGLGAEIGISTTRLHAYGPMGLDALTVERFVVRGQGQVRHCPLIHLHRDVSVANMPPITS</sequence>
<comment type="function">
    <text evidence="1">Catalyzes the NADPH-dependent reduction of L-glutamate 5-phosphate into L-glutamate 5-semialdehyde and phosphate. The product spontaneously undergoes cyclization to form 1-pyrroline-5-carboxylate.</text>
</comment>
<comment type="catalytic activity">
    <reaction evidence="1">
        <text>L-glutamate 5-semialdehyde + phosphate + NADP(+) = L-glutamyl 5-phosphate + NADPH + H(+)</text>
        <dbReference type="Rhea" id="RHEA:19541"/>
        <dbReference type="ChEBI" id="CHEBI:15378"/>
        <dbReference type="ChEBI" id="CHEBI:43474"/>
        <dbReference type="ChEBI" id="CHEBI:57783"/>
        <dbReference type="ChEBI" id="CHEBI:58066"/>
        <dbReference type="ChEBI" id="CHEBI:58274"/>
        <dbReference type="ChEBI" id="CHEBI:58349"/>
        <dbReference type="EC" id="1.2.1.41"/>
    </reaction>
</comment>
<comment type="pathway">
    <text evidence="1">Amino-acid biosynthesis; L-proline biosynthesis; L-glutamate 5-semialdehyde from L-glutamate: step 2/2.</text>
</comment>
<comment type="subcellular location">
    <subcellularLocation>
        <location evidence="1">Cytoplasm</location>
    </subcellularLocation>
</comment>
<comment type="similarity">
    <text evidence="1">Belongs to the gamma-glutamyl phosphate reductase family.</text>
</comment>
<accession>B0U208</accession>
<feature type="chain" id="PRO_1000193677" description="Gamma-glutamyl phosphate reductase">
    <location>
        <begin position="1"/>
        <end position="435"/>
    </location>
</feature>
<organism>
    <name type="scientific">Xylella fastidiosa (strain M12)</name>
    <dbReference type="NCBI Taxonomy" id="405440"/>
    <lineage>
        <taxon>Bacteria</taxon>
        <taxon>Pseudomonadati</taxon>
        <taxon>Pseudomonadota</taxon>
        <taxon>Gammaproteobacteria</taxon>
        <taxon>Lysobacterales</taxon>
        <taxon>Lysobacteraceae</taxon>
        <taxon>Xylella</taxon>
    </lineage>
</organism>
<reference key="1">
    <citation type="journal article" date="2010" name="J. Bacteriol.">
        <title>Whole genome sequences of two Xylella fastidiosa strains (M12 and M23) causing almond leaf scorch disease in California.</title>
        <authorList>
            <person name="Chen J."/>
            <person name="Xie G."/>
            <person name="Han S."/>
            <person name="Chertkov O."/>
            <person name="Sims D."/>
            <person name="Civerolo E.L."/>
        </authorList>
    </citation>
    <scope>NUCLEOTIDE SEQUENCE [LARGE SCALE GENOMIC DNA]</scope>
    <source>
        <strain>M12</strain>
    </source>
</reference>
<evidence type="ECO:0000255" key="1">
    <source>
        <dbReference type="HAMAP-Rule" id="MF_00412"/>
    </source>
</evidence>